<keyword id="KW-0150">Chloroplast</keyword>
<keyword id="KW-0934">Plastid</keyword>
<keyword id="KW-0687">Ribonucleoprotein</keyword>
<keyword id="KW-0689">Ribosomal protein</keyword>
<protein>
    <recommendedName>
        <fullName evidence="2">Small ribosomal subunit protein uS15c</fullName>
    </recommendedName>
    <alternativeName>
        <fullName>30S ribosomal protein S15, chloroplastic</fullName>
    </alternativeName>
</protein>
<sequence length="90" mass="10821">MKKKGGRKIFGFMVKEEKEENRGSVEFQVFSFTNKIRRLASHLELHKKDFSSERGLRRLLGKRRRLLAYLAKKNRVRYKKLIGQLNIREQ</sequence>
<dbReference type="EMBL" id="X14811">
    <property type="protein sequence ID" value="CAA32916.1"/>
    <property type="molecule type" value="Genomic_DNA"/>
</dbReference>
<dbReference type="PIR" id="A34435">
    <property type="entry name" value="A34435"/>
</dbReference>
<dbReference type="RefSeq" id="YP_008239217.1">
    <property type="nucleotide sequence ID" value="NC_021761.1"/>
</dbReference>
<dbReference type="SMR" id="P69662"/>
<dbReference type="EnsemblPlants" id="SECCEUnv1G0548680.1">
    <property type="protein sequence ID" value="SECCEUnv1G0548680.1.CDS.1"/>
    <property type="gene ID" value="SECCEUnv1G0548680"/>
</dbReference>
<dbReference type="EnsemblPlants" id="SECCEUnv1G0552430.1">
    <property type="protein sequence ID" value="SECCEUnv1G0552430.1.CDS.1"/>
    <property type="gene ID" value="SECCEUnv1G0552430"/>
</dbReference>
<dbReference type="EnsemblPlants" id="SECCEUnv1G0554000.1">
    <property type="protein sequence ID" value="SECCEUnv1G0554000.1.CDS.1"/>
    <property type="gene ID" value="SECCEUnv1G0554000"/>
</dbReference>
<dbReference type="EnsemblPlants" id="SECCEUnv1G0559530.1">
    <property type="protein sequence ID" value="SECCEUnv1G0559530.1.CDS.1"/>
    <property type="gene ID" value="SECCEUnv1G0559530"/>
</dbReference>
<dbReference type="EnsemblPlants" id="SECCEUnv1G0560210.1">
    <property type="protein sequence ID" value="SECCEUnv1G0560210.1.CDS.1"/>
    <property type="gene ID" value="SECCEUnv1G0560210"/>
</dbReference>
<dbReference type="GeneID" id="16792703"/>
<dbReference type="Gramene" id="SECCEUnv1G0548680.1">
    <property type="protein sequence ID" value="SECCEUnv1G0548680.1.CDS.1"/>
    <property type="gene ID" value="SECCEUnv1G0548680"/>
</dbReference>
<dbReference type="Gramene" id="SECCEUnv1G0552430.1">
    <property type="protein sequence ID" value="SECCEUnv1G0552430.1.CDS.1"/>
    <property type="gene ID" value="SECCEUnv1G0552430"/>
</dbReference>
<dbReference type="Gramene" id="SECCEUnv1G0554000.1">
    <property type="protein sequence ID" value="SECCEUnv1G0554000.1.CDS.1"/>
    <property type="gene ID" value="SECCEUnv1G0554000"/>
</dbReference>
<dbReference type="Gramene" id="SECCEUnv1G0559530.1">
    <property type="protein sequence ID" value="SECCEUnv1G0559530.1.CDS.1"/>
    <property type="gene ID" value="SECCEUnv1G0559530"/>
</dbReference>
<dbReference type="Gramene" id="SECCEUnv1G0560210.1">
    <property type="protein sequence ID" value="SECCEUnv1G0560210.1.CDS.1"/>
    <property type="gene ID" value="SECCEUnv1G0560210"/>
</dbReference>
<dbReference type="GO" id="GO:0009507">
    <property type="term" value="C:chloroplast"/>
    <property type="evidence" value="ECO:0007669"/>
    <property type="project" value="UniProtKB-SubCell"/>
</dbReference>
<dbReference type="GO" id="GO:1990904">
    <property type="term" value="C:ribonucleoprotein complex"/>
    <property type="evidence" value="ECO:0007669"/>
    <property type="project" value="UniProtKB-KW"/>
</dbReference>
<dbReference type="GO" id="GO:0005840">
    <property type="term" value="C:ribosome"/>
    <property type="evidence" value="ECO:0007669"/>
    <property type="project" value="UniProtKB-KW"/>
</dbReference>
<dbReference type="GO" id="GO:0003735">
    <property type="term" value="F:structural constituent of ribosome"/>
    <property type="evidence" value="ECO:0007669"/>
    <property type="project" value="InterPro"/>
</dbReference>
<dbReference type="GO" id="GO:0006412">
    <property type="term" value="P:translation"/>
    <property type="evidence" value="ECO:0007669"/>
    <property type="project" value="UniProtKB-UniRule"/>
</dbReference>
<dbReference type="Gene3D" id="1.10.287.10">
    <property type="entry name" value="S15/NS1, RNA-binding"/>
    <property type="match status" value="1"/>
</dbReference>
<dbReference type="HAMAP" id="MF_01343_B">
    <property type="entry name" value="Ribosomal_uS15_B"/>
    <property type="match status" value="1"/>
</dbReference>
<dbReference type="InterPro" id="IPR000589">
    <property type="entry name" value="Ribosomal_uS15"/>
</dbReference>
<dbReference type="InterPro" id="IPR005290">
    <property type="entry name" value="Ribosomal_uS15_bac-type"/>
</dbReference>
<dbReference type="InterPro" id="IPR009068">
    <property type="entry name" value="uS15_NS1_RNA-bd_sf"/>
</dbReference>
<dbReference type="NCBIfam" id="TIGR00952">
    <property type="entry name" value="S15_bact"/>
    <property type="match status" value="1"/>
</dbReference>
<dbReference type="PANTHER" id="PTHR23321">
    <property type="entry name" value="RIBOSOMAL PROTEIN S15, BACTERIAL AND ORGANELLAR"/>
    <property type="match status" value="1"/>
</dbReference>
<dbReference type="PANTHER" id="PTHR23321:SF26">
    <property type="entry name" value="SMALL RIBOSOMAL SUBUNIT PROTEIN US15M"/>
    <property type="match status" value="1"/>
</dbReference>
<dbReference type="Pfam" id="PF00312">
    <property type="entry name" value="Ribosomal_S15"/>
    <property type="match status" value="1"/>
</dbReference>
<dbReference type="SMART" id="SM01387">
    <property type="entry name" value="Ribosomal_S15"/>
    <property type="match status" value="1"/>
</dbReference>
<dbReference type="SUPFAM" id="SSF47060">
    <property type="entry name" value="S15/NS1 RNA-binding domain"/>
    <property type="match status" value="1"/>
</dbReference>
<dbReference type="PROSITE" id="PS00362">
    <property type="entry name" value="RIBOSOMAL_S15"/>
    <property type="match status" value="1"/>
</dbReference>
<proteinExistence type="inferred from homology"/>
<name>RR15_SECCE</name>
<comment type="subunit">
    <text evidence="1">Part of the 30S ribosomal subunit.</text>
</comment>
<comment type="subcellular location">
    <subcellularLocation>
        <location>Plastid</location>
        <location>Chloroplast</location>
    </subcellularLocation>
</comment>
<comment type="similarity">
    <text evidence="2">Belongs to the universal ribosomal protein uS15 family.</text>
</comment>
<organism>
    <name type="scientific">Secale cereale</name>
    <name type="common">Rye</name>
    <dbReference type="NCBI Taxonomy" id="4550"/>
    <lineage>
        <taxon>Eukaryota</taxon>
        <taxon>Viridiplantae</taxon>
        <taxon>Streptophyta</taxon>
        <taxon>Embryophyta</taxon>
        <taxon>Tracheophyta</taxon>
        <taxon>Spermatophyta</taxon>
        <taxon>Magnoliopsida</taxon>
        <taxon>Liliopsida</taxon>
        <taxon>Poales</taxon>
        <taxon>Poaceae</taxon>
        <taxon>BOP clade</taxon>
        <taxon>Pooideae</taxon>
        <taxon>Triticodae</taxon>
        <taxon>Triticeae</taxon>
        <taxon>Hordeinae</taxon>
        <taxon>Secale</taxon>
    </lineage>
</organism>
<gene>
    <name type="primary">rps15</name>
</gene>
<feature type="chain" id="PRO_0000115652" description="Small ribosomal subunit protein uS15c">
    <location>
        <begin position="1"/>
        <end position="90"/>
    </location>
</feature>
<geneLocation type="chloroplast"/>
<accession>P69662</accession>
<accession>P20283</accession>
<evidence type="ECO:0000250" key="1"/>
<evidence type="ECO:0000305" key="2"/>
<reference key="1">
    <citation type="journal article" date="1989" name="J. Biol. Chem.">
        <title>A new rearrangement of angiosperm chloroplast DNA in rye (Secale cereale) involving translocation and duplication of the ribosomal rpS15 gene.</title>
        <authorList>
            <person name="Prombona A."/>
            <person name="Subramanian A.R."/>
        </authorList>
    </citation>
    <scope>NUCLEOTIDE SEQUENCE [GENOMIC DNA]</scope>
</reference>